<reference key="1">
    <citation type="journal article" date="2004" name="Nucleic Acids Res.">
        <title>The genome sequence of Bacillus cereus ATCC 10987 reveals metabolic adaptations and a large plasmid related to Bacillus anthracis pXO1.</title>
        <authorList>
            <person name="Rasko D.A."/>
            <person name="Ravel J."/>
            <person name="Oekstad O.A."/>
            <person name="Helgason E."/>
            <person name="Cer R.Z."/>
            <person name="Jiang L."/>
            <person name="Shores K.A."/>
            <person name="Fouts D.E."/>
            <person name="Tourasse N.J."/>
            <person name="Angiuoli S.V."/>
            <person name="Kolonay J.F."/>
            <person name="Nelson W.C."/>
            <person name="Kolstoe A.-B."/>
            <person name="Fraser C.M."/>
            <person name="Read T.D."/>
        </authorList>
    </citation>
    <scope>NUCLEOTIDE SEQUENCE [LARGE SCALE GENOMIC DNA]</scope>
    <source>
        <strain>ATCC 10987 / NRS 248</strain>
    </source>
</reference>
<keyword id="KW-0031">Aminopeptidase</keyword>
<keyword id="KW-0963">Cytoplasm</keyword>
<keyword id="KW-0378">Hydrolase</keyword>
<keyword id="KW-0464">Manganese</keyword>
<keyword id="KW-0479">Metal-binding</keyword>
<keyword id="KW-0645">Protease</keyword>
<accession>Q72YG1</accession>
<proteinExistence type="inferred from homology"/>
<feature type="chain" id="PRO_0000165719" description="Probable cytosol aminopeptidase">
    <location>
        <begin position="1"/>
        <end position="494"/>
    </location>
</feature>
<feature type="active site" evidence="1">
    <location>
        <position position="272"/>
    </location>
</feature>
<feature type="active site" evidence="1">
    <location>
        <position position="346"/>
    </location>
</feature>
<feature type="binding site" evidence="1">
    <location>
        <position position="260"/>
    </location>
    <ligand>
        <name>Mn(2+)</name>
        <dbReference type="ChEBI" id="CHEBI:29035"/>
        <label>2</label>
    </ligand>
</feature>
<feature type="binding site" evidence="1">
    <location>
        <position position="265"/>
    </location>
    <ligand>
        <name>Mn(2+)</name>
        <dbReference type="ChEBI" id="CHEBI:29035"/>
        <label>1</label>
    </ligand>
</feature>
<feature type="binding site" evidence="1">
    <location>
        <position position="265"/>
    </location>
    <ligand>
        <name>Mn(2+)</name>
        <dbReference type="ChEBI" id="CHEBI:29035"/>
        <label>2</label>
    </ligand>
</feature>
<feature type="binding site" evidence="1">
    <location>
        <position position="283"/>
    </location>
    <ligand>
        <name>Mn(2+)</name>
        <dbReference type="ChEBI" id="CHEBI:29035"/>
        <label>2</label>
    </ligand>
</feature>
<feature type="binding site" evidence="1">
    <location>
        <position position="342"/>
    </location>
    <ligand>
        <name>Mn(2+)</name>
        <dbReference type="ChEBI" id="CHEBI:29035"/>
        <label>1</label>
    </ligand>
</feature>
<feature type="binding site" evidence="1">
    <location>
        <position position="344"/>
    </location>
    <ligand>
        <name>Mn(2+)</name>
        <dbReference type="ChEBI" id="CHEBI:29035"/>
        <label>1</label>
    </ligand>
</feature>
<feature type="binding site" evidence="1">
    <location>
        <position position="344"/>
    </location>
    <ligand>
        <name>Mn(2+)</name>
        <dbReference type="ChEBI" id="CHEBI:29035"/>
        <label>2</label>
    </ligand>
</feature>
<dbReference type="EC" id="3.4.11.1" evidence="1"/>
<dbReference type="EC" id="3.4.11.10" evidence="1"/>
<dbReference type="EMBL" id="AE017194">
    <property type="protein sequence ID" value="AAS43961.1"/>
    <property type="molecule type" value="Genomic_DNA"/>
</dbReference>
<dbReference type="SMR" id="Q72YG1"/>
<dbReference type="MEROPS" id="M17.010"/>
<dbReference type="KEGG" id="bca:BCE_5060"/>
<dbReference type="HOGENOM" id="CLU_013734_6_0_9"/>
<dbReference type="Proteomes" id="UP000002527">
    <property type="component" value="Chromosome"/>
</dbReference>
<dbReference type="GO" id="GO:0005737">
    <property type="term" value="C:cytoplasm"/>
    <property type="evidence" value="ECO:0007669"/>
    <property type="project" value="UniProtKB-SubCell"/>
</dbReference>
<dbReference type="GO" id="GO:0030145">
    <property type="term" value="F:manganese ion binding"/>
    <property type="evidence" value="ECO:0007669"/>
    <property type="project" value="UniProtKB-UniRule"/>
</dbReference>
<dbReference type="GO" id="GO:0070006">
    <property type="term" value="F:metalloaminopeptidase activity"/>
    <property type="evidence" value="ECO:0007669"/>
    <property type="project" value="InterPro"/>
</dbReference>
<dbReference type="GO" id="GO:0006508">
    <property type="term" value="P:proteolysis"/>
    <property type="evidence" value="ECO:0007669"/>
    <property type="project" value="UniProtKB-KW"/>
</dbReference>
<dbReference type="CDD" id="cd00433">
    <property type="entry name" value="Peptidase_M17"/>
    <property type="match status" value="1"/>
</dbReference>
<dbReference type="Gene3D" id="3.40.220.10">
    <property type="entry name" value="Leucine Aminopeptidase, subunit E, domain 1"/>
    <property type="match status" value="1"/>
</dbReference>
<dbReference type="Gene3D" id="3.40.630.10">
    <property type="entry name" value="Zn peptidases"/>
    <property type="match status" value="1"/>
</dbReference>
<dbReference type="HAMAP" id="MF_00181">
    <property type="entry name" value="Cytosol_peptidase_M17"/>
    <property type="match status" value="1"/>
</dbReference>
<dbReference type="InterPro" id="IPR011356">
    <property type="entry name" value="Leucine_aapep/pepB"/>
</dbReference>
<dbReference type="InterPro" id="IPR043472">
    <property type="entry name" value="Macro_dom-like"/>
</dbReference>
<dbReference type="InterPro" id="IPR000819">
    <property type="entry name" value="Peptidase_M17_C"/>
</dbReference>
<dbReference type="InterPro" id="IPR023042">
    <property type="entry name" value="Peptidase_M17_leu_NH2_pept"/>
</dbReference>
<dbReference type="InterPro" id="IPR008283">
    <property type="entry name" value="Peptidase_M17_N"/>
</dbReference>
<dbReference type="NCBIfam" id="NF002073">
    <property type="entry name" value="PRK00913.1-2"/>
    <property type="match status" value="1"/>
</dbReference>
<dbReference type="NCBIfam" id="NF002074">
    <property type="entry name" value="PRK00913.1-4"/>
    <property type="match status" value="1"/>
</dbReference>
<dbReference type="NCBIfam" id="NF002083">
    <property type="entry name" value="PRK00913.3-5"/>
    <property type="match status" value="1"/>
</dbReference>
<dbReference type="PANTHER" id="PTHR11963:SF23">
    <property type="entry name" value="CYTOSOL AMINOPEPTIDASE"/>
    <property type="match status" value="1"/>
</dbReference>
<dbReference type="PANTHER" id="PTHR11963">
    <property type="entry name" value="LEUCINE AMINOPEPTIDASE-RELATED"/>
    <property type="match status" value="1"/>
</dbReference>
<dbReference type="Pfam" id="PF00883">
    <property type="entry name" value="Peptidase_M17"/>
    <property type="match status" value="1"/>
</dbReference>
<dbReference type="Pfam" id="PF02789">
    <property type="entry name" value="Peptidase_M17_N"/>
    <property type="match status" value="1"/>
</dbReference>
<dbReference type="PRINTS" id="PR00481">
    <property type="entry name" value="LAMNOPPTDASE"/>
</dbReference>
<dbReference type="SUPFAM" id="SSF52949">
    <property type="entry name" value="Macro domain-like"/>
    <property type="match status" value="1"/>
</dbReference>
<dbReference type="SUPFAM" id="SSF53187">
    <property type="entry name" value="Zn-dependent exopeptidases"/>
    <property type="match status" value="1"/>
</dbReference>
<dbReference type="PROSITE" id="PS00631">
    <property type="entry name" value="CYTOSOL_AP"/>
    <property type="match status" value="1"/>
</dbReference>
<gene>
    <name evidence="1" type="primary">pepA</name>
    <name type="ordered locus">BCE_5060</name>
</gene>
<comment type="function">
    <text evidence="1">Presumably involved in the processing and regular turnover of intracellular proteins. Catalyzes the removal of unsubstituted N-terminal amino acids from various peptides.</text>
</comment>
<comment type="catalytic activity">
    <reaction evidence="1">
        <text>Release of an N-terminal amino acid, Xaa-|-Yaa-, in which Xaa is preferably Leu, but may be other amino acids including Pro although not Arg or Lys, and Yaa may be Pro. Amino acid amides and methyl esters are also readily hydrolyzed, but rates on arylamides are exceedingly low.</text>
        <dbReference type="EC" id="3.4.11.1"/>
    </reaction>
</comment>
<comment type="catalytic activity">
    <reaction evidence="1">
        <text>Release of an N-terminal amino acid, preferentially leucine, but not glutamic or aspartic acids.</text>
        <dbReference type="EC" id="3.4.11.10"/>
    </reaction>
</comment>
<comment type="cofactor">
    <cofactor evidence="1">
        <name>Mn(2+)</name>
        <dbReference type="ChEBI" id="CHEBI:29035"/>
    </cofactor>
    <text evidence="1">Binds 2 manganese ions per subunit.</text>
</comment>
<comment type="subcellular location">
    <subcellularLocation>
        <location evidence="1">Cytoplasm</location>
    </subcellularLocation>
</comment>
<comment type="similarity">
    <text evidence="1">Belongs to the peptidase M17 family.</text>
</comment>
<name>AMPA_BACC1</name>
<evidence type="ECO:0000255" key="1">
    <source>
        <dbReference type="HAMAP-Rule" id="MF_00181"/>
    </source>
</evidence>
<sequence>MFHVQKELGSHEAVIVALFEEEKTSSFVKELDKAFEGQLQVLLEEKELSTKKKAISKVHSLGKTNVKRYYFVGLGKKESYTTEILRAALGKAFKTLQAAKVQDAAILLDSFVTEKLDAIDVAHIAAEVQGLGTYELQTYKSDKKDRVELEKFTAITAEDTQEIEAALTVGYVHGRATNSARTLVNMPPNVLTATKLAEYAVELAEKYDMDYKVLEKEEMEELGMGALLAVNQGSVEPPKMIALIYKGKEEWTDVIGFVGKGITYDTGGYSLKPREGMVGMKGDMGGAAAVLGAMEIIGELRPEQNVIAVIPSTDNVVSGTAFKPDDVITSMSGKTIEVLNTDAEGRLALADGITYAKKLGANYLIDVATLTGGVIVALGNHTTGAMTNNEELFEQVLEASMETDESIWQLPIFDRDKERVRNSKFADLNNSPGREGHAVMAGTFLGEFAEDTPWVHLDIAGTSESSGAHDLGPAGATGAMVRTLATLVERFGEE</sequence>
<organism>
    <name type="scientific">Bacillus cereus (strain ATCC 10987 / NRS 248)</name>
    <dbReference type="NCBI Taxonomy" id="222523"/>
    <lineage>
        <taxon>Bacteria</taxon>
        <taxon>Bacillati</taxon>
        <taxon>Bacillota</taxon>
        <taxon>Bacilli</taxon>
        <taxon>Bacillales</taxon>
        <taxon>Bacillaceae</taxon>
        <taxon>Bacillus</taxon>
        <taxon>Bacillus cereus group</taxon>
    </lineage>
</organism>
<protein>
    <recommendedName>
        <fullName evidence="1">Probable cytosol aminopeptidase</fullName>
        <ecNumber evidence="1">3.4.11.1</ecNumber>
    </recommendedName>
    <alternativeName>
        <fullName evidence="1">Leucine aminopeptidase</fullName>
        <shortName evidence="1">LAP</shortName>
        <ecNumber evidence="1">3.4.11.10</ecNumber>
    </alternativeName>
    <alternativeName>
        <fullName evidence="1">Leucyl aminopeptidase</fullName>
    </alternativeName>
</protein>